<organism>
    <name type="scientific">Homo sapiens</name>
    <name type="common">Human</name>
    <dbReference type="NCBI Taxonomy" id="9606"/>
    <lineage>
        <taxon>Eukaryota</taxon>
        <taxon>Metazoa</taxon>
        <taxon>Chordata</taxon>
        <taxon>Craniata</taxon>
        <taxon>Vertebrata</taxon>
        <taxon>Euteleostomi</taxon>
        <taxon>Mammalia</taxon>
        <taxon>Eutheria</taxon>
        <taxon>Euarchontoglires</taxon>
        <taxon>Primates</taxon>
        <taxon>Haplorrhini</taxon>
        <taxon>Catarrhini</taxon>
        <taxon>Hominidae</taxon>
        <taxon>Homo</taxon>
    </lineage>
</organism>
<proteinExistence type="evidence at protein level"/>
<evidence type="ECO:0000250" key="1"/>
<evidence type="ECO:0000255" key="2"/>
<evidence type="ECO:0000255" key="3">
    <source>
        <dbReference type="PROSITE-ProRule" id="PRU00088"/>
    </source>
</evidence>
<evidence type="ECO:0000255" key="4">
    <source>
        <dbReference type="PROSITE-ProRule" id="PRU01266"/>
    </source>
</evidence>
<evidence type="ECO:0000256" key="5">
    <source>
        <dbReference type="SAM" id="MobiDB-lite"/>
    </source>
</evidence>
<evidence type="ECO:0000269" key="6">
    <source>
    </source>
</evidence>
<evidence type="ECO:0000303" key="7">
    <source>
    </source>
</evidence>
<evidence type="ECO:0000305" key="8"/>
<feature type="chain" id="PRO_0000281826" description="S-adenosyl-L-methionine-dependent tRNA 4-demethylwyosine synthase TYW1">
    <location>
        <begin position="1"/>
        <end position="732"/>
    </location>
</feature>
<feature type="domain" description="Flavodoxin-like" evidence="3">
    <location>
        <begin position="79"/>
        <end position="237"/>
    </location>
</feature>
<feature type="domain" description="Radical SAM core" evidence="4">
    <location>
        <begin position="400"/>
        <end position="644"/>
    </location>
</feature>
<feature type="region of interest" description="Disordered" evidence="5">
    <location>
        <begin position="248"/>
        <end position="314"/>
    </location>
</feature>
<feature type="compositionally biased region" description="Basic and acidic residues" evidence="5">
    <location>
        <begin position="259"/>
        <end position="286"/>
    </location>
</feature>
<feature type="compositionally biased region" description="Acidic residues" evidence="5">
    <location>
        <begin position="287"/>
        <end position="301"/>
    </location>
</feature>
<feature type="binding site" evidence="3">
    <location>
        <begin position="85"/>
        <end position="89"/>
    </location>
    <ligand>
        <name>FMN</name>
        <dbReference type="ChEBI" id="CHEBI:58210"/>
    </ligand>
</feature>
<feature type="binding site" evidence="3">
    <location>
        <begin position="176"/>
        <end position="208"/>
    </location>
    <ligand>
        <name>FMN</name>
        <dbReference type="ChEBI" id="CHEBI:58210"/>
    </ligand>
</feature>
<feature type="binding site" evidence="2">
    <location>
        <position position="416"/>
    </location>
    <ligand>
        <name>[4Fe-4S] cluster</name>
        <dbReference type="ChEBI" id="CHEBI:49883"/>
        <note>4Fe-4S-S-AdoMet</note>
    </ligand>
</feature>
<feature type="binding site" evidence="2">
    <location>
        <position position="420"/>
    </location>
    <ligand>
        <name>[4Fe-4S] cluster</name>
        <dbReference type="ChEBI" id="CHEBI:49883"/>
        <note>4Fe-4S-S-AdoMet</note>
    </ligand>
</feature>
<feature type="binding site" evidence="2">
    <location>
        <position position="423"/>
    </location>
    <ligand>
        <name>[4Fe-4S] cluster</name>
        <dbReference type="ChEBI" id="CHEBI:49883"/>
        <note>4Fe-4S-S-AdoMet</note>
    </ligand>
</feature>
<feature type="splice variant" id="VSP_024066" description="In isoform 2." evidence="7">
    <original>GYQLIGSHSGVKLCRWT</original>
    <variation>VHAPRERRLLQTHILWN</variation>
    <location>
        <begin position="368"/>
        <end position="384"/>
    </location>
</feature>
<feature type="splice variant" id="VSP_024067" description="In isoform 2." evidence="7">
    <location>
        <begin position="385"/>
        <end position="732"/>
    </location>
</feature>
<feature type="sequence variant" id="VAR_031288" description="In dbSNP:rs2261015.">
    <original>G</original>
    <variation>V</variation>
    <location>
        <position position="462"/>
    </location>
</feature>
<feature type="sequence variant" id="VAR_031289" description="In dbSNP:rs2949097." evidence="6">
    <original>H</original>
    <variation>R</variation>
    <location>
        <position position="632"/>
    </location>
</feature>
<feature type="sequence variant" id="VAR_031290" description="In dbSNP:rs28450001." evidence="6">
    <original>D</original>
    <variation>N</variation>
    <location>
        <position position="671"/>
    </location>
</feature>
<feature type="sequence conflict" description="In Ref. 1; BAB14307." evidence="8" ref="1">
    <original>R</original>
    <variation>M</variation>
    <location>
        <position position="382"/>
    </location>
</feature>
<feature type="sequence conflict" description="In Ref. 1; BAB14307." evidence="8" ref="1">
    <original>L</original>
    <variation>F</variation>
    <location>
        <position position="388"/>
    </location>
</feature>
<feature type="sequence conflict" description="In Ref. 1; BAB14307." evidence="8" ref="1">
    <original>C</original>
    <variation>Y</variation>
    <location>
        <position position="416"/>
    </location>
</feature>
<feature type="sequence conflict" description="In Ref. 1; BAB14307." evidence="8" ref="1">
    <original>K</original>
    <variation>R</variation>
    <location>
        <position position="543"/>
    </location>
</feature>
<sequence length="732" mass="83702">MDPSADTWDLFSPLISLWINRFYIYLGFAVSISLWICVQIVIKTQGKNLQEKSVPKAAQDLMTNGYVSLQEKDIFVSGVKIFYGSQTGTAKGFATVLAEAVTSLDLPVAIINLKEYDPDDHLIEEVTSKNVCVFLVATYTDGLPTESAEWFCKWLEEASIDFRFGKTYLKGMRYAVFGLGNSAYASHFNKVGKNVDKWLWMLGAHRVMSRGEGDCDVVKSKHGSIEADFRAWKTKFISQLQALQKGERKKSCGGHCKKGKCESHQHGSEEREEGSHEQDELHHRDTEEEEPFESSSEEEFGGEDHQSLNSIVDVEDLGKIMDHVKKEKREKEQQEEKSGLFRNMGRNEDGERRAMITPALREALTKQGYQLIGSHSGVKLCRWTKSMLRGRGGCYKHTFYGIESHRCMETTPSLACANKCVFCWRHHTNPVGTEWRWKMDQPEMILKEAIENHQNMIKQFKGVPGVKAERFEEGMTVKHCALSLVGEPIMYPEINRFLKLLHQCKISSFLVTNAQFPAEIRNLEPVTQLYVSVDASTKDSLKKIDRPLFKDFWQRFLDSLKALAVKQQRTVYRLTLVKAWNVDELQAYAQLVSLGNPDFIEVKGVTYCGESSASSLTMAHVPWHEEVVQFVHELVDLIPEYEIACEHEHSNCLLIAHRKFKIGGEWWTWIDYNRFQELIQEYEDSGGSKTFSAKDYMARTPHWALFGASERGFDPKDTRHQRKNKSKAISGC</sequence>
<dbReference type="EC" id="4.1.3.44"/>
<dbReference type="EMBL" id="AK001762">
    <property type="protein sequence ID" value="BAA91891.1"/>
    <property type="molecule type" value="mRNA"/>
</dbReference>
<dbReference type="EMBL" id="AK022917">
    <property type="protein sequence ID" value="BAB14307.1"/>
    <property type="status" value="ALT_INIT"/>
    <property type="molecule type" value="mRNA"/>
</dbReference>
<dbReference type="EMBL" id="AC079920">
    <property type="status" value="NOT_ANNOTATED_CDS"/>
    <property type="molecule type" value="Genomic_DNA"/>
</dbReference>
<dbReference type="EMBL" id="AC006480">
    <property type="protein sequence ID" value="AAS07568.1"/>
    <property type="molecule type" value="Genomic_DNA"/>
</dbReference>
<dbReference type="EMBL" id="AC073089">
    <property type="protein sequence ID" value="AAS07520.1"/>
    <property type="molecule type" value="Genomic_DNA"/>
</dbReference>
<dbReference type="EMBL" id="BC015591">
    <property type="protein sequence ID" value="AAH15591.1"/>
    <property type="status" value="ALT_FRAME"/>
    <property type="molecule type" value="mRNA"/>
</dbReference>
<dbReference type="EMBL" id="BC042156">
    <property type="protein sequence ID" value="AAH42156.1"/>
    <property type="status" value="ALT_TERM"/>
    <property type="molecule type" value="mRNA"/>
</dbReference>
<dbReference type="EMBL" id="BC051888">
    <property type="protein sequence ID" value="AAH51888.1"/>
    <property type="molecule type" value="mRNA"/>
</dbReference>
<dbReference type="CCDS" id="CCDS5538.1">
    <molecule id="Q9NV66-1"/>
</dbReference>
<dbReference type="RefSeq" id="NP_060734.2">
    <molecule id="Q9NV66-1"/>
    <property type="nucleotide sequence ID" value="NM_018264.4"/>
</dbReference>
<dbReference type="SMR" id="Q9NV66"/>
<dbReference type="BioGRID" id="120544">
    <property type="interactions" value="135"/>
</dbReference>
<dbReference type="FunCoup" id="Q9NV66">
    <property type="interactions" value="2983"/>
</dbReference>
<dbReference type="IntAct" id="Q9NV66">
    <property type="interactions" value="78"/>
</dbReference>
<dbReference type="STRING" id="9606.ENSP00000352645"/>
<dbReference type="GlyGen" id="Q9NV66">
    <property type="glycosylation" value="1 site, 1 O-linked glycan (1 site)"/>
</dbReference>
<dbReference type="iPTMnet" id="Q9NV66"/>
<dbReference type="PhosphoSitePlus" id="Q9NV66"/>
<dbReference type="SwissPalm" id="Q9NV66"/>
<dbReference type="BioMuta" id="TYW1"/>
<dbReference type="DMDM" id="143678193"/>
<dbReference type="jPOST" id="Q9NV66"/>
<dbReference type="MassIVE" id="Q9NV66"/>
<dbReference type="PaxDb" id="9606-ENSP00000352645"/>
<dbReference type="PeptideAtlas" id="Q9NV66"/>
<dbReference type="ProteomicsDB" id="82752">
    <molecule id="Q9NV66-1"/>
</dbReference>
<dbReference type="ProteomicsDB" id="82753">
    <molecule id="Q9NV66-2"/>
</dbReference>
<dbReference type="Pumba" id="Q9NV66"/>
<dbReference type="Antibodypedia" id="2749">
    <property type="antibodies" value="67 antibodies from 20 providers"/>
</dbReference>
<dbReference type="DNASU" id="55253"/>
<dbReference type="Ensembl" id="ENST00000359626.10">
    <molecule id="Q9NV66-1"/>
    <property type="protein sequence ID" value="ENSP00000352645.5"/>
    <property type="gene ID" value="ENSG00000198874.14"/>
</dbReference>
<dbReference type="Ensembl" id="ENST00000361660.8">
    <molecule id="Q9NV66-2"/>
    <property type="protein sequence ID" value="ENSP00000354795.4"/>
    <property type="gene ID" value="ENSG00000198874.14"/>
</dbReference>
<dbReference type="GeneID" id="55253"/>
<dbReference type="KEGG" id="hsa:55253"/>
<dbReference type="MANE-Select" id="ENST00000359626.10">
    <property type="protein sequence ID" value="ENSP00000352645.5"/>
    <property type="RefSeq nucleotide sequence ID" value="NM_018264.4"/>
    <property type="RefSeq protein sequence ID" value="NP_060734.2"/>
</dbReference>
<dbReference type="UCSC" id="uc003tvn.5">
    <molecule id="Q9NV66-1"/>
    <property type="organism name" value="human"/>
</dbReference>
<dbReference type="AGR" id="HGNC:25598"/>
<dbReference type="CTD" id="55253"/>
<dbReference type="DisGeNET" id="55253"/>
<dbReference type="GeneCards" id="TYW1"/>
<dbReference type="HGNC" id="HGNC:25598">
    <property type="gene designation" value="TYW1"/>
</dbReference>
<dbReference type="HPA" id="ENSG00000198874">
    <property type="expression patterns" value="Low tissue specificity"/>
</dbReference>
<dbReference type="MalaCards" id="TYW1"/>
<dbReference type="MIM" id="611243">
    <property type="type" value="gene"/>
</dbReference>
<dbReference type="neXtProt" id="NX_Q9NV66"/>
<dbReference type="OpenTargets" id="ENSG00000198874"/>
<dbReference type="PharmGKB" id="PA134940167"/>
<dbReference type="VEuPathDB" id="HostDB:ENSG00000198874"/>
<dbReference type="eggNOG" id="KOG1160">
    <property type="taxonomic scope" value="Eukaryota"/>
</dbReference>
<dbReference type="GeneTree" id="ENSGT00510000047059"/>
<dbReference type="HOGENOM" id="CLU_007952_2_0_1"/>
<dbReference type="InParanoid" id="Q9NV66"/>
<dbReference type="OMA" id="TMANIPW"/>
<dbReference type="OrthoDB" id="271553at2759"/>
<dbReference type="PAN-GO" id="Q9NV66">
    <property type="GO annotations" value="1 GO annotation based on evolutionary models"/>
</dbReference>
<dbReference type="PhylomeDB" id="Q9NV66"/>
<dbReference type="TreeFam" id="TF300773"/>
<dbReference type="PathwayCommons" id="Q9NV66"/>
<dbReference type="Reactome" id="R-HSA-6782861">
    <property type="pathway name" value="Synthesis of wybutosine at G37 of tRNA(Phe)"/>
</dbReference>
<dbReference type="SignaLink" id="Q9NV66"/>
<dbReference type="UniPathway" id="UPA00375"/>
<dbReference type="BioGRID-ORCS" id="55253">
    <property type="hits" value="14 hits in 1119 CRISPR screens"/>
</dbReference>
<dbReference type="ChiTaRS" id="TYW1">
    <property type="organism name" value="human"/>
</dbReference>
<dbReference type="GenomeRNAi" id="55253"/>
<dbReference type="Pharos" id="Q9NV66">
    <property type="development level" value="Tbio"/>
</dbReference>
<dbReference type="PRO" id="PR:Q9NV66"/>
<dbReference type="Proteomes" id="UP000005640">
    <property type="component" value="Chromosome 7"/>
</dbReference>
<dbReference type="RNAct" id="Q9NV66">
    <property type="molecule type" value="protein"/>
</dbReference>
<dbReference type="Bgee" id="ENSG00000198874">
    <property type="expression patterns" value="Expressed in sural nerve and 101 other cell types or tissues"/>
</dbReference>
<dbReference type="ExpressionAtlas" id="Q9NV66">
    <property type="expression patterns" value="baseline and differential"/>
</dbReference>
<dbReference type="GO" id="GO:0051539">
    <property type="term" value="F:4 iron, 4 sulfur cluster binding"/>
    <property type="evidence" value="ECO:0007669"/>
    <property type="project" value="UniProtKB-KW"/>
</dbReference>
<dbReference type="GO" id="GO:0010181">
    <property type="term" value="F:FMN binding"/>
    <property type="evidence" value="ECO:0007669"/>
    <property type="project" value="InterPro"/>
</dbReference>
<dbReference type="GO" id="GO:0046872">
    <property type="term" value="F:metal ion binding"/>
    <property type="evidence" value="ECO:0007669"/>
    <property type="project" value="UniProtKB-KW"/>
</dbReference>
<dbReference type="GO" id="GO:0102521">
    <property type="term" value="F:tRNA-4-demethylwyosine synthase activity"/>
    <property type="evidence" value="ECO:0007669"/>
    <property type="project" value="UniProtKB-EC"/>
</dbReference>
<dbReference type="GO" id="GO:0031591">
    <property type="term" value="P:wybutosine biosynthetic process"/>
    <property type="evidence" value="ECO:0000318"/>
    <property type="project" value="GO_Central"/>
</dbReference>
<dbReference type="CDD" id="cd01335">
    <property type="entry name" value="Radical_SAM"/>
    <property type="match status" value="1"/>
</dbReference>
<dbReference type="FunFam" id="3.20.20.70:FF:000196">
    <property type="entry name" value="S-adenosyl-L-methionine-dependent tRNA 4-demethylwyosine synthase"/>
    <property type="match status" value="1"/>
</dbReference>
<dbReference type="Gene3D" id="3.40.50.360">
    <property type="match status" value="1"/>
</dbReference>
<dbReference type="Gene3D" id="3.20.20.70">
    <property type="entry name" value="Aldolase class I"/>
    <property type="match status" value="1"/>
</dbReference>
<dbReference type="InterPro" id="IPR013785">
    <property type="entry name" value="Aldolase_TIM"/>
</dbReference>
<dbReference type="InterPro" id="IPR001094">
    <property type="entry name" value="Flavdoxin-like"/>
</dbReference>
<dbReference type="InterPro" id="IPR008254">
    <property type="entry name" value="Flavodoxin/NO_synth"/>
</dbReference>
<dbReference type="InterPro" id="IPR029039">
    <property type="entry name" value="Flavoprotein-like_sf"/>
</dbReference>
<dbReference type="InterPro" id="IPR007197">
    <property type="entry name" value="rSAM"/>
</dbReference>
<dbReference type="InterPro" id="IPR013917">
    <property type="entry name" value="tRNA_wybutosine-synth"/>
</dbReference>
<dbReference type="InterPro" id="IPR034556">
    <property type="entry name" value="tRNA_wybutosine-synthase"/>
</dbReference>
<dbReference type="PANTHER" id="PTHR13930">
    <property type="entry name" value="S-ADENOSYL-L-METHIONINE-DEPENDENT TRNA 4-DEMETHYLWYOSINE SYNTHASE"/>
    <property type="match status" value="1"/>
</dbReference>
<dbReference type="PANTHER" id="PTHR13930:SF0">
    <property type="entry name" value="S-ADENOSYL-L-METHIONINE-DEPENDENT TRNA 4-DEMETHYLWYOSINE SYNTHASE TYW1-RELATED"/>
    <property type="match status" value="1"/>
</dbReference>
<dbReference type="Pfam" id="PF00258">
    <property type="entry name" value="Flavodoxin_1"/>
    <property type="match status" value="1"/>
</dbReference>
<dbReference type="Pfam" id="PF04055">
    <property type="entry name" value="Radical_SAM"/>
    <property type="match status" value="1"/>
</dbReference>
<dbReference type="Pfam" id="PF08608">
    <property type="entry name" value="Wyosine_form"/>
    <property type="match status" value="1"/>
</dbReference>
<dbReference type="PRINTS" id="PR00369">
    <property type="entry name" value="FLAVODOXIN"/>
</dbReference>
<dbReference type="SFLD" id="SFLDS00029">
    <property type="entry name" value="Radical_SAM"/>
    <property type="match status" value="1"/>
</dbReference>
<dbReference type="SFLD" id="SFLDF00284">
    <property type="entry name" value="tRNA_wybutosine-synthesizing"/>
    <property type="match status" value="1"/>
</dbReference>
<dbReference type="SUPFAM" id="SSF52218">
    <property type="entry name" value="Flavoproteins"/>
    <property type="match status" value="1"/>
</dbReference>
<dbReference type="SUPFAM" id="SSF102114">
    <property type="entry name" value="Radical SAM enzymes"/>
    <property type="match status" value="1"/>
</dbReference>
<dbReference type="PROSITE" id="PS50902">
    <property type="entry name" value="FLAVODOXIN_LIKE"/>
    <property type="match status" value="1"/>
</dbReference>
<dbReference type="PROSITE" id="PS51918">
    <property type="entry name" value="RADICAL_SAM"/>
    <property type="match status" value="1"/>
</dbReference>
<comment type="function">
    <text evidence="1">Probable component of the wybutosine biosynthesis pathway. Wybutosine is a hyper modified guanosine with a tricyclic base found at the 3'-position adjacent to the anticodon of eukaryotic phenylalanine tRNA. Catalyzes the condensation of N-methylguanine with 2 carbon atoms from pyruvate to form the tricyclic 4-demethylwyosine, an intermediate in wybutosine biosynthesis (By similarity).</text>
</comment>
<comment type="catalytic activity">
    <reaction>
        <text>N(1)-methylguanosine(37) in tRNA(Phe) + pyruvate + S-adenosyl-L-methionine = 4-demethylwyosine(37) in tRNA(Phe) + 5'-deoxyadenosine + L-methionine + CO2 + H2O</text>
        <dbReference type="Rhea" id="RHEA:36347"/>
        <dbReference type="Rhea" id="RHEA-COMP:10164"/>
        <dbReference type="Rhea" id="RHEA-COMP:10165"/>
        <dbReference type="ChEBI" id="CHEBI:15361"/>
        <dbReference type="ChEBI" id="CHEBI:15377"/>
        <dbReference type="ChEBI" id="CHEBI:16526"/>
        <dbReference type="ChEBI" id="CHEBI:17319"/>
        <dbReference type="ChEBI" id="CHEBI:57844"/>
        <dbReference type="ChEBI" id="CHEBI:59789"/>
        <dbReference type="ChEBI" id="CHEBI:64315"/>
        <dbReference type="ChEBI" id="CHEBI:73542"/>
        <dbReference type="EC" id="4.1.3.44"/>
    </reaction>
</comment>
<comment type="cofactor">
    <cofactor evidence="1">
        <name>[4Fe-4S] cluster</name>
        <dbReference type="ChEBI" id="CHEBI:49883"/>
    </cofactor>
    <text evidence="1">Binds 1 [4Fe-4S] cluster. The cluster is coordinated with 3 cysteines and an exchangeable S-adenosyl-L-methionine.</text>
</comment>
<comment type="pathway">
    <text>tRNA modification; wybutosine-tRNA(Phe) biosynthesis.</text>
</comment>
<comment type="alternative products">
    <event type="alternative splicing"/>
    <isoform>
        <id>Q9NV66-1</id>
        <name>1</name>
        <sequence type="displayed"/>
    </isoform>
    <isoform>
        <id>Q9NV66-2</id>
        <name>2</name>
        <sequence type="described" ref="VSP_024066 VSP_024067"/>
    </isoform>
</comment>
<comment type="similarity">
    <text evidence="8">Belongs to the TYW1 family.</text>
</comment>
<comment type="sequence caution" evidence="8">
    <conflict type="frameshift">
        <sequence resource="EMBL-CDS" id="AAH15591"/>
    </conflict>
</comment>
<comment type="sequence caution" evidence="8">
    <conflict type="erroneous initiation">
        <sequence resource="EMBL-CDS" id="BAB14307"/>
    </conflict>
</comment>
<keyword id="KW-0004">4Fe-4S</keyword>
<keyword id="KW-0025">Alternative splicing</keyword>
<keyword id="KW-0408">Iron</keyword>
<keyword id="KW-0411">Iron-sulfur</keyword>
<keyword id="KW-0456">Lyase</keyword>
<keyword id="KW-0479">Metal-binding</keyword>
<keyword id="KW-0547">Nucleotide-binding</keyword>
<keyword id="KW-1267">Proteomics identification</keyword>
<keyword id="KW-1185">Reference proteome</keyword>
<keyword id="KW-0949">S-adenosyl-L-methionine</keyword>
<keyword id="KW-0819">tRNA processing</keyword>
<name>TYW1_HUMAN</name>
<protein>
    <recommendedName>
        <fullName>S-adenosyl-L-methionine-dependent tRNA 4-demethylwyosine synthase TYW1</fullName>
        <ecNumber>4.1.3.44</ecNumber>
    </recommendedName>
    <alternativeName>
        <fullName>Radical S-adenosyl methionine and flavodoxin domain-containing protein 1</fullName>
    </alternativeName>
    <alternativeName>
        <fullName>tRNA wybutosine-synthesizing protein 1 homolog</fullName>
    </alternativeName>
    <alternativeName>
        <fullName>tRNA-yW-synthesizing protein</fullName>
    </alternativeName>
</protein>
<gene>
    <name type="primary">TYW1</name>
    <name type="synonym">RSAFD1</name>
</gene>
<reference key="1">
    <citation type="journal article" date="2004" name="Nat. Genet.">
        <title>Complete sequencing and characterization of 21,243 full-length human cDNAs.</title>
        <authorList>
            <person name="Ota T."/>
            <person name="Suzuki Y."/>
            <person name="Nishikawa T."/>
            <person name="Otsuki T."/>
            <person name="Sugiyama T."/>
            <person name="Irie R."/>
            <person name="Wakamatsu A."/>
            <person name="Hayashi K."/>
            <person name="Sato H."/>
            <person name="Nagai K."/>
            <person name="Kimura K."/>
            <person name="Makita H."/>
            <person name="Sekine M."/>
            <person name="Obayashi M."/>
            <person name="Nishi T."/>
            <person name="Shibahara T."/>
            <person name="Tanaka T."/>
            <person name="Ishii S."/>
            <person name="Yamamoto J."/>
            <person name="Saito K."/>
            <person name="Kawai Y."/>
            <person name="Isono Y."/>
            <person name="Nakamura Y."/>
            <person name="Nagahari K."/>
            <person name="Murakami K."/>
            <person name="Yasuda T."/>
            <person name="Iwayanagi T."/>
            <person name="Wagatsuma M."/>
            <person name="Shiratori A."/>
            <person name="Sudo H."/>
            <person name="Hosoiri T."/>
            <person name="Kaku Y."/>
            <person name="Kodaira H."/>
            <person name="Kondo H."/>
            <person name="Sugawara M."/>
            <person name="Takahashi M."/>
            <person name="Kanda K."/>
            <person name="Yokoi T."/>
            <person name="Furuya T."/>
            <person name="Kikkawa E."/>
            <person name="Omura Y."/>
            <person name="Abe K."/>
            <person name="Kamihara K."/>
            <person name="Katsuta N."/>
            <person name="Sato K."/>
            <person name="Tanikawa M."/>
            <person name="Yamazaki M."/>
            <person name="Ninomiya K."/>
            <person name="Ishibashi T."/>
            <person name="Yamashita H."/>
            <person name="Murakawa K."/>
            <person name="Fujimori K."/>
            <person name="Tanai H."/>
            <person name="Kimata M."/>
            <person name="Watanabe M."/>
            <person name="Hiraoka S."/>
            <person name="Chiba Y."/>
            <person name="Ishida S."/>
            <person name="Ono Y."/>
            <person name="Takiguchi S."/>
            <person name="Watanabe S."/>
            <person name="Yosida M."/>
            <person name="Hotuta T."/>
            <person name="Kusano J."/>
            <person name="Kanehori K."/>
            <person name="Takahashi-Fujii A."/>
            <person name="Hara H."/>
            <person name="Tanase T.-O."/>
            <person name="Nomura Y."/>
            <person name="Togiya S."/>
            <person name="Komai F."/>
            <person name="Hara R."/>
            <person name="Takeuchi K."/>
            <person name="Arita M."/>
            <person name="Imose N."/>
            <person name="Musashino K."/>
            <person name="Yuuki H."/>
            <person name="Oshima A."/>
            <person name="Sasaki N."/>
            <person name="Aotsuka S."/>
            <person name="Yoshikawa Y."/>
            <person name="Matsunawa H."/>
            <person name="Ichihara T."/>
            <person name="Shiohata N."/>
            <person name="Sano S."/>
            <person name="Moriya S."/>
            <person name="Momiyama H."/>
            <person name="Satoh N."/>
            <person name="Takami S."/>
            <person name="Terashima Y."/>
            <person name="Suzuki O."/>
            <person name="Nakagawa S."/>
            <person name="Senoh A."/>
            <person name="Mizoguchi H."/>
            <person name="Goto Y."/>
            <person name="Shimizu F."/>
            <person name="Wakebe H."/>
            <person name="Hishigaki H."/>
            <person name="Watanabe T."/>
            <person name="Sugiyama A."/>
            <person name="Takemoto M."/>
            <person name="Kawakami B."/>
            <person name="Yamazaki M."/>
            <person name="Watanabe K."/>
            <person name="Kumagai A."/>
            <person name="Itakura S."/>
            <person name="Fukuzumi Y."/>
            <person name="Fujimori Y."/>
            <person name="Komiyama M."/>
            <person name="Tashiro H."/>
            <person name="Tanigami A."/>
            <person name="Fujiwara T."/>
            <person name="Ono T."/>
            <person name="Yamada K."/>
            <person name="Fujii Y."/>
            <person name="Ozaki K."/>
            <person name="Hirao M."/>
            <person name="Ohmori Y."/>
            <person name="Kawabata A."/>
            <person name="Hikiji T."/>
            <person name="Kobatake N."/>
            <person name="Inagaki H."/>
            <person name="Ikema Y."/>
            <person name="Okamoto S."/>
            <person name="Okitani R."/>
            <person name="Kawakami T."/>
            <person name="Noguchi S."/>
            <person name="Itoh T."/>
            <person name="Shigeta K."/>
            <person name="Senba T."/>
            <person name="Matsumura K."/>
            <person name="Nakajima Y."/>
            <person name="Mizuno T."/>
            <person name="Morinaga M."/>
            <person name="Sasaki M."/>
            <person name="Togashi T."/>
            <person name="Oyama M."/>
            <person name="Hata H."/>
            <person name="Watanabe M."/>
            <person name="Komatsu T."/>
            <person name="Mizushima-Sugano J."/>
            <person name="Satoh T."/>
            <person name="Shirai Y."/>
            <person name="Takahashi Y."/>
            <person name="Nakagawa K."/>
            <person name="Okumura K."/>
            <person name="Nagase T."/>
            <person name="Nomura N."/>
            <person name="Kikuchi H."/>
            <person name="Masuho Y."/>
            <person name="Yamashita R."/>
            <person name="Nakai K."/>
            <person name="Yada T."/>
            <person name="Nakamura Y."/>
            <person name="Ohara O."/>
            <person name="Isogai T."/>
            <person name="Sugano S."/>
        </authorList>
    </citation>
    <scope>NUCLEOTIDE SEQUENCE [LARGE SCALE MRNA] (ISOFORM 1)</scope>
    <scope>VARIANTS ARG-632 AND ASN-671</scope>
    <source>
        <tissue>Teratocarcinoma</tissue>
    </source>
</reference>
<reference key="2">
    <citation type="journal article" date="2003" name="Nature">
        <title>The DNA sequence of human chromosome 7.</title>
        <authorList>
            <person name="Hillier L.W."/>
            <person name="Fulton R.S."/>
            <person name="Fulton L.A."/>
            <person name="Graves T.A."/>
            <person name="Pepin K.H."/>
            <person name="Wagner-McPherson C."/>
            <person name="Layman D."/>
            <person name="Maas J."/>
            <person name="Jaeger S."/>
            <person name="Walker R."/>
            <person name="Wylie K."/>
            <person name="Sekhon M."/>
            <person name="Becker M.C."/>
            <person name="O'Laughlin M.D."/>
            <person name="Schaller M.E."/>
            <person name="Fewell G.A."/>
            <person name="Delehaunty K.D."/>
            <person name="Miner T.L."/>
            <person name="Nash W.E."/>
            <person name="Cordes M."/>
            <person name="Du H."/>
            <person name="Sun H."/>
            <person name="Edwards J."/>
            <person name="Bradshaw-Cordum H."/>
            <person name="Ali J."/>
            <person name="Andrews S."/>
            <person name="Isak A."/>
            <person name="Vanbrunt A."/>
            <person name="Nguyen C."/>
            <person name="Du F."/>
            <person name="Lamar B."/>
            <person name="Courtney L."/>
            <person name="Kalicki J."/>
            <person name="Ozersky P."/>
            <person name="Bielicki L."/>
            <person name="Scott K."/>
            <person name="Holmes A."/>
            <person name="Harkins R."/>
            <person name="Harris A."/>
            <person name="Strong C.M."/>
            <person name="Hou S."/>
            <person name="Tomlinson C."/>
            <person name="Dauphin-Kohlberg S."/>
            <person name="Kozlowicz-Reilly A."/>
            <person name="Leonard S."/>
            <person name="Rohlfing T."/>
            <person name="Rock S.M."/>
            <person name="Tin-Wollam A.-M."/>
            <person name="Abbott A."/>
            <person name="Minx P."/>
            <person name="Maupin R."/>
            <person name="Strowmatt C."/>
            <person name="Latreille P."/>
            <person name="Miller N."/>
            <person name="Johnson D."/>
            <person name="Murray J."/>
            <person name="Woessner J.P."/>
            <person name="Wendl M.C."/>
            <person name="Yang S.-P."/>
            <person name="Schultz B.R."/>
            <person name="Wallis J.W."/>
            <person name="Spieth J."/>
            <person name="Bieri T.A."/>
            <person name="Nelson J.O."/>
            <person name="Berkowicz N."/>
            <person name="Wohldmann P.E."/>
            <person name="Cook L.L."/>
            <person name="Hickenbotham M.T."/>
            <person name="Eldred J."/>
            <person name="Williams D."/>
            <person name="Bedell J.A."/>
            <person name="Mardis E.R."/>
            <person name="Clifton S.W."/>
            <person name="Chissoe S.L."/>
            <person name="Marra M.A."/>
            <person name="Raymond C."/>
            <person name="Haugen E."/>
            <person name="Gillett W."/>
            <person name="Zhou Y."/>
            <person name="James R."/>
            <person name="Phelps K."/>
            <person name="Iadanoto S."/>
            <person name="Bubb K."/>
            <person name="Simms E."/>
            <person name="Levy R."/>
            <person name="Clendenning J."/>
            <person name="Kaul R."/>
            <person name="Kent W.J."/>
            <person name="Furey T.S."/>
            <person name="Baertsch R.A."/>
            <person name="Brent M.R."/>
            <person name="Keibler E."/>
            <person name="Flicek P."/>
            <person name="Bork P."/>
            <person name="Suyama M."/>
            <person name="Bailey J.A."/>
            <person name="Portnoy M.E."/>
            <person name="Torrents D."/>
            <person name="Chinwalla A.T."/>
            <person name="Gish W.R."/>
            <person name="Eddy S.R."/>
            <person name="McPherson J.D."/>
            <person name="Olson M.V."/>
            <person name="Eichler E.E."/>
            <person name="Green E.D."/>
            <person name="Waterston R.H."/>
            <person name="Wilson R.K."/>
        </authorList>
    </citation>
    <scope>NUCLEOTIDE SEQUENCE [LARGE SCALE GENOMIC DNA]</scope>
</reference>
<reference key="3">
    <citation type="journal article" date="2004" name="Genome Res.">
        <title>The status, quality, and expansion of the NIH full-length cDNA project: the Mammalian Gene Collection (MGC).</title>
        <authorList>
            <consortium name="The MGC Project Team"/>
        </authorList>
    </citation>
    <scope>NUCLEOTIDE SEQUENCE [LARGE SCALE MRNA] (ISOFORMS 1 AND 2)</scope>
    <source>
        <tissue>Colon</tissue>
        <tissue>Placenta</tissue>
        <tissue>Uterus</tissue>
    </source>
</reference>
<accession>Q9NV66</accession>
<accession>Q6PJG8</accession>
<accession>Q75MG8</accession>
<accession>Q75MN3</accession>
<accession>Q86V12</accession>
<accession>Q8IVS7</accession>
<accession>Q9H9C4</accession>